<organism>
    <name type="scientific">Cucurbita maxima</name>
    <name type="common">Pumpkin</name>
    <name type="synonym">Winter squash</name>
    <dbReference type="NCBI Taxonomy" id="3661"/>
    <lineage>
        <taxon>Eukaryota</taxon>
        <taxon>Viridiplantae</taxon>
        <taxon>Streptophyta</taxon>
        <taxon>Embryophyta</taxon>
        <taxon>Tracheophyta</taxon>
        <taxon>Spermatophyta</taxon>
        <taxon>Magnoliopsida</taxon>
        <taxon>eudicotyledons</taxon>
        <taxon>Gunneridae</taxon>
        <taxon>Pentapetalae</taxon>
        <taxon>rosids</taxon>
        <taxon>fabids</taxon>
        <taxon>Cucurbitales</taxon>
        <taxon>Cucurbitaceae</taxon>
        <taxon>Cucurbiteae</taxon>
        <taxon>Cucurbita</taxon>
    </lineage>
</organism>
<evidence type="ECO:0000269" key="1">
    <source>
    </source>
</evidence>
<evidence type="ECO:0000305" key="2"/>
<sequence>ASFDEAPPGNSKAGEKIFKTKCAQCHTVDKGAGHKQGPNLNGLFGRQSGTTPGYSYSAANKNRAVIWEEKTLYDYLLNPKKYIPGTKMVFPGLKKPQDRADLIAYLKEATA</sequence>
<reference key="1">
    <citation type="journal article" date="1971" name="Biochem. J.">
        <title>The amino acid sequence of cytochrome c from Cucurbita maxima L. (pumpkin).</title>
        <authorList>
            <person name="Thompson E.W."/>
            <person name="Richardson M."/>
            <person name="Boulter D."/>
        </authorList>
    </citation>
    <scope>PROTEIN SEQUENCE</scope>
    <scope>ACETYLATION AT ALA-1</scope>
    <scope>METHYLATION AT LYS-80 AND LYS-94</scope>
</reference>
<protein>
    <recommendedName>
        <fullName>Cytochrome c</fullName>
    </recommendedName>
</protein>
<feature type="chain" id="PRO_0000108292" description="Cytochrome c">
    <location>
        <begin position="1"/>
        <end position="111"/>
    </location>
</feature>
<feature type="binding site" description="covalent">
    <location>
        <position position="22"/>
    </location>
    <ligand>
        <name>heme c</name>
        <dbReference type="ChEBI" id="CHEBI:61717"/>
    </ligand>
</feature>
<feature type="binding site" description="covalent">
    <location>
        <position position="25"/>
    </location>
    <ligand>
        <name>heme c</name>
        <dbReference type="ChEBI" id="CHEBI:61717"/>
    </ligand>
</feature>
<feature type="binding site" description="axial binding residue">
    <location>
        <position position="26"/>
    </location>
    <ligand>
        <name>heme c</name>
        <dbReference type="ChEBI" id="CHEBI:61717"/>
    </ligand>
    <ligandPart>
        <name>Fe</name>
        <dbReference type="ChEBI" id="CHEBI:18248"/>
    </ligandPart>
</feature>
<feature type="binding site" description="axial binding residue">
    <location>
        <position position="88"/>
    </location>
    <ligand>
        <name>heme c</name>
        <dbReference type="ChEBI" id="CHEBI:61717"/>
    </ligand>
    <ligandPart>
        <name>Fe</name>
        <dbReference type="ChEBI" id="CHEBI:18248"/>
    </ligandPart>
</feature>
<feature type="modified residue" description="N-acetylalanine" evidence="1">
    <location>
        <position position="1"/>
    </location>
</feature>
<feature type="modified residue" description="N6,N6,N6-trimethyllysine" evidence="1">
    <location>
        <position position="80"/>
    </location>
</feature>
<feature type="modified residue" description="N6,N6,N6-trimethyllysine" evidence="1">
    <location>
        <position position="94"/>
    </location>
</feature>
<feature type="sequence variant">
    <original>Q</original>
    <variation>K</variation>
    <location>
        <position position="47"/>
    </location>
</feature>
<feature type="sequence variant">
    <original>P</original>
    <variation>A</variation>
    <location>
        <position position="52"/>
    </location>
</feature>
<feature type="sequence variant">
    <original>A</original>
    <variation>S</variation>
    <location>
        <position position="109"/>
    </location>
</feature>
<comment type="function">
    <text>Electron carrier protein. The oxidized form of the cytochrome c heme group can accept an electron from the heme group of the cytochrome c1 subunit of cytochrome reductase. Cytochrome c then transfers this electron to the cytochrome oxidase complex, the final protein carrier in the mitochondrial electron-transport chain.</text>
</comment>
<comment type="subcellular location">
    <subcellularLocation>
        <location>Mitochondrion intermembrane space</location>
    </subcellularLocation>
    <text>Loosely associated with the inner membrane.</text>
</comment>
<comment type="PTM">
    <text>Binds 1 heme c group covalently per subunit.</text>
</comment>
<comment type="similarity">
    <text evidence="2">Belongs to the cytochrome c family.</text>
</comment>
<comment type="online information" name="Protein Spotlight">
    <link uri="https://www.proteinspotlight.org/back_issues/076"/>
    <text>Life shuttle - Issue 76 of November 2006</text>
</comment>
<accession>P00051</accession>
<proteinExistence type="evidence at protein level"/>
<keyword id="KW-0007">Acetylation</keyword>
<keyword id="KW-0903">Direct protein sequencing</keyword>
<keyword id="KW-0249">Electron transport</keyword>
<keyword id="KW-0349">Heme</keyword>
<keyword id="KW-0408">Iron</keyword>
<keyword id="KW-0479">Metal-binding</keyword>
<keyword id="KW-0488">Methylation</keyword>
<keyword id="KW-0496">Mitochondrion</keyword>
<keyword id="KW-1185">Reference proteome</keyword>
<keyword id="KW-0679">Respiratory chain</keyword>
<keyword id="KW-0813">Transport</keyword>
<dbReference type="PIR" id="A00044">
    <property type="entry name" value="CCPU"/>
</dbReference>
<dbReference type="SMR" id="P00051"/>
<dbReference type="iPTMnet" id="P00051"/>
<dbReference type="Proteomes" id="UP000504608">
    <property type="component" value="Unplaced"/>
</dbReference>
<dbReference type="GO" id="GO:0005758">
    <property type="term" value="C:mitochondrial intermembrane space"/>
    <property type="evidence" value="ECO:0007669"/>
    <property type="project" value="UniProtKB-SubCell"/>
</dbReference>
<dbReference type="GO" id="GO:0009055">
    <property type="term" value="F:electron transfer activity"/>
    <property type="evidence" value="ECO:0007669"/>
    <property type="project" value="InterPro"/>
</dbReference>
<dbReference type="GO" id="GO:0020037">
    <property type="term" value="F:heme binding"/>
    <property type="evidence" value="ECO:0007669"/>
    <property type="project" value="InterPro"/>
</dbReference>
<dbReference type="GO" id="GO:0046872">
    <property type="term" value="F:metal ion binding"/>
    <property type="evidence" value="ECO:0007669"/>
    <property type="project" value="UniProtKB-KW"/>
</dbReference>
<dbReference type="FunFam" id="1.10.760.10:FF:000001">
    <property type="entry name" value="Cytochrome c iso-1"/>
    <property type="match status" value="1"/>
</dbReference>
<dbReference type="Gene3D" id="1.10.760.10">
    <property type="entry name" value="Cytochrome c-like domain"/>
    <property type="match status" value="1"/>
</dbReference>
<dbReference type="InterPro" id="IPR009056">
    <property type="entry name" value="Cyt_c-like_dom"/>
</dbReference>
<dbReference type="InterPro" id="IPR036909">
    <property type="entry name" value="Cyt_c-like_dom_sf"/>
</dbReference>
<dbReference type="InterPro" id="IPR002327">
    <property type="entry name" value="Cyt_c_1A/1B"/>
</dbReference>
<dbReference type="PANTHER" id="PTHR11961">
    <property type="entry name" value="CYTOCHROME C"/>
    <property type="match status" value="1"/>
</dbReference>
<dbReference type="Pfam" id="PF00034">
    <property type="entry name" value="Cytochrom_C"/>
    <property type="match status" value="1"/>
</dbReference>
<dbReference type="PRINTS" id="PR00604">
    <property type="entry name" value="CYTCHRMECIAB"/>
</dbReference>
<dbReference type="SUPFAM" id="SSF46626">
    <property type="entry name" value="Cytochrome c"/>
    <property type="match status" value="1"/>
</dbReference>
<dbReference type="PROSITE" id="PS51007">
    <property type="entry name" value="CYTC"/>
    <property type="match status" value="1"/>
</dbReference>
<name>CYC_CUCMA</name>